<gene>
    <name type="primary">RRP14</name>
    <name type="ordered locus">YKL082C</name>
</gene>
<reference key="1">
    <citation type="journal article" date="1994" name="Nature">
        <title>Complete DNA sequence of yeast chromosome XI.</title>
        <authorList>
            <person name="Dujon B."/>
            <person name="Alexandraki D."/>
            <person name="Andre B."/>
            <person name="Ansorge W."/>
            <person name="Baladron V."/>
            <person name="Ballesta J.P.G."/>
            <person name="Banrevi A."/>
            <person name="Bolle P.-A."/>
            <person name="Bolotin-Fukuhara M."/>
            <person name="Bossier P."/>
            <person name="Bou G."/>
            <person name="Boyer J."/>
            <person name="Buitrago M.J."/>
            <person name="Cheret G."/>
            <person name="Colleaux L."/>
            <person name="Daignan-Fornier B."/>
            <person name="del Rey F."/>
            <person name="Dion C."/>
            <person name="Domdey H."/>
            <person name="Duesterhoeft A."/>
            <person name="Duesterhus S."/>
            <person name="Entian K.-D."/>
            <person name="Erfle H."/>
            <person name="Esteban P.F."/>
            <person name="Feldmann H."/>
            <person name="Fernandes L."/>
            <person name="Fobo G.M."/>
            <person name="Fritz C."/>
            <person name="Fukuhara H."/>
            <person name="Gabel C."/>
            <person name="Gaillon L."/>
            <person name="Garcia-Cantalejo J.M."/>
            <person name="Garcia-Ramirez J.J."/>
            <person name="Gent M.E."/>
            <person name="Ghazvini M."/>
            <person name="Goffeau A."/>
            <person name="Gonzalez A."/>
            <person name="Grothues D."/>
            <person name="Guerreiro P."/>
            <person name="Hegemann J.H."/>
            <person name="Hewitt N."/>
            <person name="Hilger F."/>
            <person name="Hollenberg C.P."/>
            <person name="Horaitis O."/>
            <person name="Indge K.J."/>
            <person name="Jacquier A."/>
            <person name="James C.M."/>
            <person name="Jauniaux J.-C."/>
            <person name="Jimenez A."/>
            <person name="Keuchel H."/>
            <person name="Kirchrath L."/>
            <person name="Kleine K."/>
            <person name="Koetter P."/>
            <person name="Legrain P."/>
            <person name="Liebl S."/>
            <person name="Louis E.J."/>
            <person name="Maia e Silva A."/>
            <person name="Marck C."/>
            <person name="Monnier A.-L."/>
            <person name="Moestl D."/>
            <person name="Mueller S."/>
            <person name="Obermaier B."/>
            <person name="Oliver S.G."/>
            <person name="Pallier C."/>
            <person name="Pascolo S."/>
            <person name="Pfeiffer F."/>
            <person name="Philippsen P."/>
            <person name="Planta R.J."/>
            <person name="Pohl F.M."/>
            <person name="Pohl T.M."/>
            <person name="Poehlmann R."/>
            <person name="Portetelle D."/>
            <person name="Purnelle B."/>
            <person name="Puzos V."/>
            <person name="Ramezani Rad M."/>
            <person name="Rasmussen S.W."/>
            <person name="Remacha M.A."/>
            <person name="Revuelta J.L."/>
            <person name="Richard G.-F."/>
            <person name="Rieger M."/>
            <person name="Rodrigues-Pousada C."/>
            <person name="Rose M."/>
            <person name="Rupp T."/>
            <person name="Santos M.A."/>
            <person name="Schwager C."/>
            <person name="Sensen C."/>
            <person name="Skala J."/>
            <person name="Soares H."/>
            <person name="Sor F."/>
            <person name="Stegemann J."/>
            <person name="Tettelin H."/>
            <person name="Thierry A."/>
            <person name="Tzermia M."/>
            <person name="Urrestarazu L.A."/>
            <person name="van Dyck L."/>
            <person name="van Vliet-Reedijk J.C."/>
            <person name="Valens M."/>
            <person name="Vandenbol M."/>
            <person name="Vilela C."/>
            <person name="Vissers S."/>
            <person name="von Wettstein D."/>
            <person name="Voss H."/>
            <person name="Wiemann S."/>
            <person name="Xu G."/>
            <person name="Zimmermann J."/>
            <person name="Haasemann M."/>
            <person name="Becker I."/>
            <person name="Mewes H.-W."/>
        </authorList>
    </citation>
    <scope>NUCLEOTIDE SEQUENCE [LARGE SCALE GENOMIC DNA]</scope>
    <source>
        <strain>ATCC 204508 / S288c</strain>
    </source>
</reference>
<reference key="2">
    <citation type="journal article" date="2014" name="G3 (Bethesda)">
        <title>The reference genome sequence of Saccharomyces cerevisiae: Then and now.</title>
        <authorList>
            <person name="Engel S.R."/>
            <person name="Dietrich F.S."/>
            <person name="Fisk D.G."/>
            <person name="Binkley G."/>
            <person name="Balakrishnan R."/>
            <person name="Costanzo M.C."/>
            <person name="Dwight S.S."/>
            <person name="Hitz B.C."/>
            <person name="Karra K."/>
            <person name="Nash R.S."/>
            <person name="Weng S."/>
            <person name="Wong E.D."/>
            <person name="Lloyd P."/>
            <person name="Skrzypek M.S."/>
            <person name="Miyasato S.R."/>
            <person name="Simison M."/>
            <person name="Cherry J.M."/>
        </authorList>
    </citation>
    <scope>GENOME REANNOTATION</scope>
    <source>
        <strain>ATCC 204508 / S288c</strain>
    </source>
</reference>
<reference key="3">
    <citation type="journal article" date="2006" name="Yeast">
        <title>The budding yeast rRNA and ribosome biosynthesis (RRB) regulon contains over 200 genes.</title>
        <authorList>
            <person name="Wade C.H."/>
            <person name="Umbarger M.A."/>
            <person name="McAlear M.A."/>
        </authorList>
    </citation>
    <scope>FUNCTION</scope>
</reference>
<reference key="4">
    <citation type="journal article" date="2007" name="Nucleic Acids Res.">
        <title>Yeast Rrp14p is required for ribosomal subunit synthesis and for correct positioning of the mitotic spindle during mitosis.</title>
        <authorList>
            <person name="Oeffinger M."/>
            <person name="Fatica A."/>
            <person name="Rout M.P."/>
            <person name="Tollervey D."/>
        </authorList>
    </citation>
    <scope>FUNCTION</scope>
    <scope>IDENTIFICATION IN THE 60S PRE-RIBOSOMAL PARTICLE</scope>
</reference>
<reference key="5">
    <citation type="journal article" date="2007" name="RNA">
        <title>Yeast Rrp14p is a nucleolar protein involved in both ribosome biogenesis and cell polarity.</title>
        <authorList>
            <person name="Yamada H."/>
            <person name="Horigome C."/>
            <person name="Okada T."/>
            <person name="Shirai C."/>
            <person name="Mizuta K."/>
        </authorList>
    </citation>
    <scope>SUBCELLULAR LOCATION</scope>
    <scope>FUNCTION</scope>
    <scope>IDENTIFICATION IN THE 90S PRE-RIBOSOMAL PARTICLE</scope>
</reference>
<reference key="6">
    <citation type="journal article" date="2012" name="Proc. Natl. Acad. Sci. U.S.A.">
        <title>N-terminal acetylome analyses and functional insights of the N-terminal acetyltransferase NatB.</title>
        <authorList>
            <person name="Van Damme P."/>
            <person name="Lasa M."/>
            <person name="Polevoda B."/>
            <person name="Gazquez C."/>
            <person name="Elosegui-Artola A."/>
            <person name="Kim D.S."/>
            <person name="De Juan-Pardo E."/>
            <person name="Demeyer K."/>
            <person name="Hole K."/>
            <person name="Larrea E."/>
            <person name="Timmerman E."/>
            <person name="Prieto J."/>
            <person name="Arnesen T."/>
            <person name="Sherman F."/>
            <person name="Gevaert K."/>
            <person name="Aldabe R."/>
        </authorList>
    </citation>
    <scope>ACETYLATION [LARGE SCALE ANALYSIS] AT SER-2</scope>
    <scope>CLEAVAGE OF INITIATOR METHIONINE [LARGE SCALE ANALYSIS]</scope>
    <scope>IDENTIFICATION BY MASS SPECTROMETRY [LARGE SCALE ANALYSIS]</scope>
</reference>
<organism>
    <name type="scientific">Saccharomyces cerevisiae (strain ATCC 204508 / S288c)</name>
    <name type="common">Baker's yeast</name>
    <dbReference type="NCBI Taxonomy" id="559292"/>
    <lineage>
        <taxon>Eukaryota</taxon>
        <taxon>Fungi</taxon>
        <taxon>Dikarya</taxon>
        <taxon>Ascomycota</taxon>
        <taxon>Saccharomycotina</taxon>
        <taxon>Saccharomycetes</taxon>
        <taxon>Saccharomycetales</taxon>
        <taxon>Saccharomycetaceae</taxon>
        <taxon>Saccharomyces</taxon>
    </lineage>
</organism>
<keyword id="KW-0002">3D-structure</keyword>
<keyword id="KW-0007">Acetylation</keyword>
<keyword id="KW-0175">Coiled coil</keyword>
<keyword id="KW-0539">Nucleus</keyword>
<keyword id="KW-1185">Reference proteome</keyword>
<keyword id="KW-0690">Ribosome biogenesis</keyword>
<keyword id="KW-0698">rRNA processing</keyword>
<evidence type="ECO:0000255" key="1"/>
<evidence type="ECO:0000256" key="2">
    <source>
        <dbReference type="SAM" id="MobiDB-lite"/>
    </source>
</evidence>
<evidence type="ECO:0000269" key="3">
    <source>
    </source>
</evidence>
<evidence type="ECO:0000269" key="4">
    <source>
    </source>
</evidence>
<evidence type="ECO:0000269" key="5">
    <source>
    </source>
</evidence>
<evidence type="ECO:0000305" key="6"/>
<evidence type="ECO:0007744" key="7">
    <source>
    </source>
</evidence>
<sequence>MSNSLEERLRANSSAFDGLLALIPAKYYYDEKSQEQWKAKKKTKEQSKNDKLKKLDPEQRDDETSSTLEVMKKKEKDAKPVVLPGEKFKHMKMQKQKEATSKVEGDSDLNVEVNDPMIIAPDEDEEEEEDIKVIFDDEGNEIPLESKKDTTEPDRSVEKKSITEEEKLQRKKNLEALRSKLQAKISDMKSKRKAPGSREAILAQRKRKEELKKRKRLESEQEQDQDEIASDSDMEDIDSDLENNSKKRFKKGKKDSEINADGVMFQNIIFDDGARATSDLQRLRKAGRTKGPAKNDVKSHLKLLEAKKNKMEAKDELEQIKQKEKEKWQKAMLQAEGIKIRDDEKLLRKAIKRKEAQKRKSAIEWSERKRVVEDTISERQKRREENLRIRKDNKGKKRNKQEKMKRKYVGSAVPKKRAGFEGRLKTGKKKGGPK</sequence>
<accession>P36080</accession>
<accession>D6VXK5</accession>
<name>RRP14_YEAST</name>
<dbReference type="EMBL" id="Z28082">
    <property type="protein sequence ID" value="CAA81921.1"/>
    <property type="molecule type" value="Genomic_DNA"/>
</dbReference>
<dbReference type="EMBL" id="BK006944">
    <property type="protein sequence ID" value="DAA09075.1"/>
    <property type="molecule type" value="Genomic_DNA"/>
</dbReference>
<dbReference type="PIR" id="S37907">
    <property type="entry name" value="S37907"/>
</dbReference>
<dbReference type="RefSeq" id="NP_012841.1">
    <property type="nucleotide sequence ID" value="NM_001179648.1"/>
</dbReference>
<dbReference type="PDB" id="6C0F">
    <property type="method" value="EM"/>
    <property type="resolution" value="3.70 A"/>
    <property type="chains" value="8=1-434"/>
</dbReference>
<dbReference type="PDB" id="8V83">
    <property type="method" value="EM"/>
    <property type="resolution" value="2.53 A"/>
    <property type="chains" value="8=1-434"/>
</dbReference>
<dbReference type="PDB" id="8V84">
    <property type="method" value="EM"/>
    <property type="resolution" value="2.70 A"/>
    <property type="chains" value="8=1-434"/>
</dbReference>
<dbReference type="PDBsum" id="6C0F"/>
<dbReference type="PDBsum" id="8V83"/>
<dbReference type="PDBsum" id="8V84"/>
<dbReference type="EMDB" id="EMD-43017"/>
<dbReference type="EMDB" id="EMD-43021"/>
<dbReference type="EMDB" id="EMD-7324"/>
<dbReference type="SMR" id="P36080"/>
<dbReference type="BioGRID" id="34050">
    <property type="interactions" value="163"/>
</dbReference>
<dbReference type="DIP" id="DIP-2694N"/>
<dbReference type="FunCoup" id="P36080">
    <property type="interactions" value="443"/>
</dbReference>
<dbReference type="IntAct" id="P36080">
    <property type="interactions" value="57"/>
</dbReference>
<dbReference type="MINT" id="P36080"/>
<dbReference type="STRING" id="4932.YKL082C"/>
<dbReference type="iPTMnet" id="P36080"/>
<dbReference type="PaxDb" id="4932-YKL082C"/>
<dbReference type="PeptideAtlas" id="P36080"/>
<dbReference type="EnsemblFungi" id="YKL082C_mRNA">
    <property type="protein sequence ID" value="YKL082C"/>
    <property type="gene ID" value="YKL082C"/>
</dbReference>
<dbReference type="GeneID" id="853780"/>
<dbReference type="KEGG" id="sce:YKL082C"/>
<dbReference type="AGR" id="SGD:S000001565"/>
<dbReference type="SGD" id="S000001565">
    <property type="gene designation" value="RRP14"/>
</dbReference>
<dbReference type="VEuPathDB" id="FungiDB:YKL082C"/>
<dbReference type="eggNOG" id="KOG2885">
    <property type="taxonomic scope" value="Eukaryota"/>
</dbReference>
<dbReference type="GeneTree" id="ENSGT00390000006980"/>
<dbReference type="HOGENOM" id="CLU_018300_0_0_1"/>
<dbReference type="InParanoid" id="P36080"/>
<dbReference type="OMA" id="QKKRTDN"/>
<dbReference type="OrthoDB" id="444809at2759"/>
<dbReference type="BioCyc" id="YEAST:G3O-31877-MONOMER"/>
<dbReference type="BioGRID-ORCS" id="853780">
    <property type="hits" value="3 hits in 10 CRISPR screens"/>
</dbReference>
<dbReference type="CD-CODE" id="BDAE0F88">
    <property type="entry name" value="Nucleolus"/>
</dbReference>
<dbReference type="PRO" id="PR:P36080"/>
<dbReference type="Proteomes" id="UP000002311">
    <property type="component" value="Chromosome XI"/>
</dbReference>
<dbReference type="RNAct" id="P36080">
    <property type="molecule type" value="protein"/>
</dbReference>
<dbReference type="GO" id="GO:0005730">
    <property type="term" value="C:nucleolus"/>
    <property type="evidence" value="ECO:0000314"/>
    <property type="project" value="SGD"/>
</dbReference>
<dbReference type="GO" id="GO:0003677">
    <property type="term" value="F:DNA binding"/>
    <property type="evidence" value="ECO:0000318"/>
    <property type="project" value="GO_Central"/>
</dbReference>
<dbReference type="GO" id="GO:0003723">
    <property type="term" value="F:RNA binding"/>
    <property type="evidence" value="ECO:0000318"/>
    <property type="project" value="GO_Central"/>
</dbReference>
<dbReference type="GO" id="GO:0042273">
    <property type="term" value="P:ribosomal large subunit biogenesis"/>
    <property type="evidence" value="ECO:0000315"/>
    <property type="project" value="SGD"/>
</dbReference>
<dbReference type="GO" id="GO:0042274">
    <property type="term" value="P:ribosomal small subunit biogenesis"/>
    <property type="evidence" value="ECO:0000315"/>
    <property type="project" value="SGD"/>
</dbReference>
<dbReference type="GO" id="GO:0006364">
    <property type="term" value="P:rRNA processing"/>
    <property type="evidence" value="ECO:0007669"/>
    <property type="project" value="UniProtKB-KW"/>
</dbReference>
<dbReference type="DisProt" id="DP02355"/>
<dbReference type="InterPro" id="IPR029190">
    <property type="entry name" value="Rrp14/SURF6_C"/>
</dbReference>
<dbReference type="InterPro" id="IPR029188">
    <property type="entry name" value="Rrp14_N"/>
</dbReference>
<dbReference type="InterPro" id="IPR007019">
    <property type="entry name" value="SURF6"/>
</dbReference>
<dbReference type="PANTHER" id="PTHR14369">
    <property type="entry name" value="SURFEIT LOCUS PROTEIN 6"/>
    <property type="match status" value="1"/>
</dbReference>
<dbReference type="PANTHER" id="PTHR14369:SF0">
    <property type="entry name" value="SURFEIT LOCUS PROTEIN 6"/>
    <property type="match status" value="1"/>
</dbReference>
<dbReference type="Pfam" id="PF15459">
    <property type="entry name" value="RRP14"/>
    <property type="match status" value="1"/>
</dbReference>
<dbReference type="Pfam" id="PF04935">
    <property type="entry name" value="SURF6"/>
    <property type="match status" value="1"/>
</dbReference>
<feature type="initiator methionine" description="Removed" evidence="7">
    <location>
        <position position="1"/>
    </location>
</feature>
<feature type="chain" id="PRO_0000203167" description="Ribosomal RNA-processing protein 14">
    <location>
        <begin position="2"/>
        <end position="434"/>
    </location>
</feature>
<feature type="region of interest" description="Disordered" evidence="2">
    <location>
        <begin position="32"/>
        <end position="257"/>
    </location>
</feature>
<feature type="region of interest" description="Disordered" evidence="2">
    <location>
        <begin position="375"/>
        <end position="434"/>
    </location>
</feature>
<feature type="coiled-coil region" evidence="1">
    <location>
        <begin position="162"/>
        <end position="230"/>
    </location>
</feature>
<feature type="coiled-coil region" evidence="1">
    <location>
        <begin position="293"/>
        <end position="360"/>
    </location>
</feature>
<feature type="compositionally biased region" description="Basic and acidic residues" evidence="2">
    <location>
        <begin position="32"/>
        <end position="58"/>
    </location>
</feature>
<feature type="compositionally biased region" description="Basic and acidic residues" evidence="2">
    <location>
        <begin position="70"/>
        <end position="79"/>
    </location>
</feature>
<feature type="compositionally biased region" description="Basic and acidic residues" evidence="2">
    <location>
        <begin position="95"/>
        <end position="105"/>
    </location>
</feature>
<feature type="compositionally biased region" description="Acidic residues" evidence="2">
    <location>
        <begin position="121"/>
        <end position="140"/>
    </location>
</feature>
<feature type="compositionally biased region" description="Basic and acidic residues" evidence="2">
    <location>
        <begin position="144"/>
        <end position="178"/>
    </location>
</feature>
<feature type="compositionally biased region" description="Acidic residues" evidence="2">
    <location>
        <begin position="220"/>
        <end position="241"/>
    </location>
</feature>
<feature type="compositionally biased region" description="Basic and acidic residues" evidence="2">
    <location>
        <begin position="375"/>
        <end position="392"/>
    </location>
</feature>
<feature type="compositionally biased region" description="Basic residues" evidence="2">
    <location>
        <begin position="393"/>
        <end position="408"/>
    </location>
</feature>
<feature type="compositionally biased region" description="Basic residues" evidence="2">
    <location>
        <begin position="425"/>
        <end position="434"/>
    </location>
</feature>
<feature type="modified residue" description="N-acetylserine" evidence="7">
    <location>
        <position position="2"/>
    </location>
</feature>
<protein>
    <recommendedName>
        <fullName>Ribosomal RNA-processing protein 14</fullName>
    </recommendedName>
    <alternativeName>
        <fullName>Ribosome biogenesis protein RRP14</fullName>
    </alternativeName>
</protein>
<comment type="function">
    <text evidence="3 4 5">Involved in ribosome biogenesis and cell polarity. Required for the synthesis of both 40S and 60S ribosomal subunits and may also play some direct role in correct positioning of the mitotic spindle during mitosis.</text>
</comment>
<comment type="subunit">
    <text evidence="4 5">Component of the 90S and 60S pre-ribosomal particles.</text>
</comment>
<comment type="interaction">
    <interactant intactId="EBI-26762">
        <id>P36080</id>
    </interactant>
    <interactant intactId="EBI-5644">
        <id>Q12389</id>
        <label>DBP10</label>
    </interactant>
    <organismsDiffer>false</organismsDiffer>
    <experiments>3</experiments>
</comment>
<comment type="interaction">
    <interactant intactId="EBI-26762">
        <id>P36080</id>
    </interactant>
    <interactant intactId="EBI-6289">
        <id>P36049</id>
        <label>EBP2</label>
    </interactant>
    <organismsDiffer>false</organismsDiffer>
    <experiments>3</experiments>
</comment>
<comment type="interaction">
    <interactant intactId="EBI-26762">
        <id>P36080</id>
    </interactant>
    <interactant intactId="EBI-6951">
        <id>P38911</id>
        <label>FPR3</label>
    </interactant>
    <organismsDiffer>false</organismsDiffer>
    <experiments>3</experiments>
</comment>
<comment type="interaction">
    <interactant intactId="EBI-26762">
        <id>P36080</id>
    </interactant>
    <interactant intactId="EBI-22906">
        <id>P43586</id>
        <label>LOC1</label>
    </interactant>
    <organismsDiffer>false</organismsDiffer>
    <experiments>4</experiments>
</comment>
<comment type="interaction">
    <interactant intactId="EBI-26762">
        <id>P36080</id>
    </interactant>
    <interactant intactId="EBI-29259">
        <id>P39744</id>
        <label>NOC2</label>
    </interactant>
    <organismsDiffer>false</organismsDiffer>
    <experiments>3</experiments>
</comment>
<comment type="interaction">
    <interactant intactId="EBI-26762">
        <id>P36080</id>
    </interactant>
    <interactant intactId="EBI-12122">
        <id>P37838</id>
        <label>NOP4</label>
    </interactant>
    <organismsDiffer>false</organismsDiffer>
    <experiments>4</experiments>
</comment>
<comment type="interaction">
    <interactant intactId="EBI-26762">
        <id>P36080</id>
    </interactant>
    <interactant intactId="EBI-17814">
        <id>P25582</id>
        <label>SPB1</label>
    </interactant>
    <organismsDiffer>false</organismsDiffer>
    <experiments>3</experiments>
</comment>
<comment type="subcellular location">
    <subcellularLocation>
        <location evidence="5">Nucleus</location>
        <location evidence="5">Nucleolus</location>
    </subcellularLocation>
</comment>
<comment type="similarity">
    <text evidence="6">Belongs to the SURF6 family.</text>
</comment>
<proteinExistence type="evidence at protein level"/>